<name>C516A_DICDI</name>
<sequence length="487" mass="55281">MIILLLSIIIFILYIVKIFKNKSCCGNEIILPPGPISLPFIGNLHQLAIDPHLAIQKLMFKYGNVMTVYFANIKTVVISDPNYLKEVFVNQSHKTSDRYLMGTSRIIGNEKDILFSNGQYWKNYRQILAQSFLKLRDHKGITEKISLESVKLSQAFEWYATSGQVVNPCSLFKMYTLNVIMQLLYSHRSSYDLKGQHPIIDALKMVEESLAVGNVLDLFPILNIFLKKNKLKLVNNLQQVWSYSQDSIKEHREKLLINPEKIDDLLDLFINEIKLSKNSEFFDDEGLYRVCSDLLLSGTETSSSTMSWLLLFLINNPNFQDKVRTELLEATGGKKTIGLTEKSKTPFFNACIKEALRIRPVGALSLPRIASEDVTCGPYTIEKGSQIIMNVYGLAMDPTVWEDPETFNPYRWLSSDISQSTYSFIPFGCGSRVCVGSSLARDEIFLGIGNILLNYIFESQNGKPINEKGHFGIALQTVDYNVKLTKI</sequence>
<gene>
    <name type="primary">cyp516A1</name>
    <name type="ORF">DDB_G0292168</name>
</gene>
<dbReference type="EC" id="1.14.-.-"/>
<dbReference type="EMBL" id="AAFI02000187">
    <property type="protein sequence ID" value="EAL61440.2"/>
    <property type="molecule type" value="Genomic_DNA"/>
</dbReference>
<dbReference type="RefSeq" id="XP_629790.2">
    <property type="nucleotide sequence ID" value="XM_629788.2"/>
</dbReference>
<dbReference type="SMR" id="Q54DT2"/>
<dbReference type="FunCoup" id="Q54DT2">
    <property type="interactions" value="6"/>
</dbReference>
<dbReference type="STRING" id="44689.Q54DT2"/>
<dbReference type="PaxDb" id="44689-DDB0232988"/>
<dbReference type="EnsemblProtists" id="EAL61440">
    <property type="protein sequence ID" value="EAL61440"/>
    <property type="gene ID" value="DDB_G0292168"/>
</dbReference>
<dbReference type="GeneID" id="8628467"/>
<dbReference type="KEGG" id="ddi:DDB_G0292168"/>
<dbReference type="dictyBase" id="DDB_G0292168">
    <property type="gene designation" value="cyp516A1"/>
</dbReference>
<dbReference type="VEuPathDB" id="AmoebaDB:DDB_G0292168"/>
<dbReference type="eggNOG" id="KOG0156">
    <property type="taxonomic scope" value="Eukaryota"/>
</dbReference>
<dbReference type="HOGENOM" id="CLU_001570_22_0_1"/>
<dbReference type="InParanoid" id="Q54DT2"/>
<dbReference type="OMA" id="RPPNHIG"/>
<dbReference type="PhylomeDB" id="Q54DT2"/>
<dbReference type="Reactome" id="R-DDI-211935">
    <property type="pathway name" value="Fatty acids"/>
</dbReference>
<dbReference type="Reactome" id="R-DDI-211945">
    <property type="pathway name" value="Phase I - Functionalization of compounds"/>
</dbReference>
<dbReference type="Reactome" id="R-DDI-211958">
    <property type="pathway name" value="Miscellaneous substrates"/>
</dbReference>
<dbReference type="Reactome" id="R-DDI-211981">
    <property type="pathway name" value="Xenobiotics"/>
</dbReference>
<dbReference type="Reactome" id="R-DDI-211999">
    <property type="pathway name" value="CYP2E1 reactions"/>
</dbReference>
<dbReference type="Reactome" id="R-DDI-2142670">
    <property type="pathway name" value="Synthesis of epoxy (EET) and dihydroxyeicosatrienoic acids (DHET)"/>
</dbReference>
<dbReference type="Reactome" id="R-DDI-2142816">
    <property type="pathway name" value="Synthesis of (16-20)-hydroxyeicosatetraenoic acids (HETE)"/>
</dbReference>
<dbReference type="Reactome" id="R-DDI-5423646">
    <property type="pathway name" value="Aflatoxin activation and detoxification"/>
</dbReference>
<dbReference type="Reactome" id="R-DDI-9027307">
    <property type="pathway name" value="Biosynthesis of maresin-like SPMs"/>
</dbReference>
<dbReference type="Reactome" id="R-DDI-9749641">
    <property type="pathway name" value="Aspirin ADME"/>
</dbReference>
<dbReference type="Reactome" id="R-DDI-9753281">
    <property type="pathway name" value="Paracetamol ADME"/>
</dbReference>
<dbReference type="PRO" id="PR:Q54DT2"/>
<dbReference type="Proteomes" id="UP000002195">
    <property type="component" value="Chromosome 6"/>
</dbReference>
<dbReference type="GO" id="GO:0005737">
    <property type="term" value="C:cytoplasm"/>
    <property type="evidence" value="ECO:0000318"/>
    <property type="project" value="GO_Central"/>
</dbReference>
<dbReference type="GO" id="GO:0043231">
    <property type="term" value="C:intracellular membrane-bounded organelle"/>
    <property type="evidence" value="ECO:0000318"/>
    <property type="project" value="GO_Central"/>
</dbReference>
<dbReference type="GO" id="GO:0016020">
    <property type="term" value="C:membrane"/>
    <property type="evidence" value="ECO:0007669"/>
    <property type="project" value="UniProtKB-SubCell"/>
</dbReference>
<dbReference type="GO" id="GO:0020037">
    <property type="term" value="F:heme binding"/>
    <property type="evidence" value="ECO:0000318"/>
    <property type="project" value="GO_Central"/>
</dbReference>
<dbReference type="GO" id="GO:0005506">
    <property type="term" value="F:iron ion binding"/>
    <property type="evidence" value="ECO:0007669"/>
    <property type="project" value="InterPro"/>
</dbReference>
<dbReference type="GO" id="GO:0016712">
    <property type="term" value="F:oxidoreductase activity, acting on paired donors, with incorporation or reduction of molecular oxygen, reduced flavin or flavoprotein as one donor, and incorporation of one atom of oxygen"/>
    <property type="evidence" value="ECO:0000318"/>
    <property type="project" value="GO_Central"/>
</dbReference>
<dbReference type="GO" id="GO:0006082">
    <property type="term" value="P:organic acid metabolic process"/>
    <property type="evidence" value="ECO:0000318"/>
    <property type="project" value="GO_Central"/>
</dbReference>
<dbReference type="GO" id="GO:0006805">
    <property type="term" value="P:xenobiotic metabolic process"/>
    <property type="evidence" value="ECO:0000318"/>
    <property type="project" value="GO_Central"/>
</dbReference>
<dbReference type="CDD" id="cd20617">
    <property type="entry name" value="CYP1_2-like"/>
    <property type="match status" value="1"/>
</dbReference>
<dbReference type="FunFam" id="1.10.630.10:FF:000068">
    <property type="entry name" value="Probable cytochrome P450 508A2"/>
    <property type="match status" value="1"/>
</dbReference>
<dbReference type="Gene3D" id="1.10.630.10">
    <property type="entry name" value="Cytochrome P450"/>
    <property type="match status" value="1"/>
</dbReference>
<dbReference type="InterPro" id="IPR001128">
    <property type="entry name" value="Cyt_P450"/>
</dbReference>
<dbReference type="InterPro" id="IPR017972">
    <property type="entry name" value="Cyt_P450_CS"/>
</dbReference>
<dbReference type="InterPro" id="IPR002401">
    <property type="entry name" value="Cyt_P450_E_grp-I"/>
</dbReference>
<dbReference type="InterPro" id="IPR036396">
    <property type="entry name" value="Cyt_P450_sf"/>
</dbReference>
<dbReference type="PANTHER" id="PTHR24303:SF31">
    <property type="entry name" value="CYTOCHROME P450 307A1-RELATED"/>
    <property type="match status" value="1"/>
</dbReference>
<dbReference type="PANTHER" id="PTHR24303">
    <property type="entry name" value="HEME-BINDING MONOOXYGENASE FAMILY"/>
    <property type="match status" value="1"/>
</dbReference>
<dbReference type="Pfam" id="PF00067">
    <property type="entry name" value="p450"/>
    <property type="match status" value="1"/>
</dbReference>
<dbReference type="PRINTS" id="PR00463">
    <property type="entry name" value="EP450I"/>
</dbReference>
<dbReference type="PRINTS" id="PR00385">
    <property type="entry name" value="P450"/>
</dbReference>
<dbReference type="SUPFAM" id="SSF48264">
    <property type="entry name" value="Cytochrome P450"/>
    <property type="match status" value="1"/>
</dbReference>
<dbReference type="PROSITE" id="PS00086">
    <property type="entry name" value="CYTOCHROME_P450"/>
    <property type="match status" value="1"/>
</dbReference>
<feature type="chain" id="PRO_0000318825" description="Probable cytochrome P450 516A1">
    <location>
        <begin position="1"/>
        <end position="487"/>
    </location>
</feature>
<feature type="transmembrane region" description="Helical" evidence="2">
    <location>
        <begin position="1"/>
        <end position="21"/>
    </location>
</feature>
<feature type="binding site" description="axial binding residue" evidence="1">
    <location>
        <position position="434"/>
    </location>
    <ligand>
        <name>heme</name>
        <dbReference type="ChEBI" id="CHEBI:30413"/>
    </ligand>
    <ligandPart>
        <name>Fe</name>
        <dbReference type="ChEBI" id="CHEBI:18248"/>
    </ligandPart>
</feature>
<comment type="cofactor">
    <cofactor evidence="1">
        <name>heme</name>
        <dbReference type="ChEBI" id="CHEBI:30413"/>
    </cofactor>
</comment>
<comment type="subcellular location">
    <subcellularLocation>
        <location evidence="3">Membrane</location>
        <topology evidence="3">Single-pass membrane protein</topology>
    </subcellularLocation>
</comment>
<comment type="similarity">
    <text evidence="3">Belongs to the cytochrome P450 family.</text>
</comment>
<protein>
    <recommendedName>
        <fullName>Probable cytochrome P450 516A1</fullName>
        <ecNumber>1.14.-.-</ecNumber>
    </recommendedName>
</protein>
<reference key="1">
    <citation type="journal article" date="2005" name="Nature">
        <title>The genome of the social amoeba Dictyostelium discoideum.</title>
        <authorList>
            <person name="Eichinger L."/>
            <person name="Pachebat J.A."/>
            <person name="Gloeckner G."/>
            <person name="Rajandream M.A."/>
            <person name="Sucgang R."/>
            <person name="Berriman M."/>
            <person name="Song J."/>
            <person name="Olsen R."/>
            <person name="Szafranski K."/>
            <person name="Xu Q."/>
            <person name="Tunggal B."/>
            <person name="Kummerfeld S."/>
            <person name="Madera M."/>
            <person name="Konfortov B.A."/>
            <person name="Rivero F."/>
            <person name="Bankier A.T."/>
            <person name="Lehmann R."/>
            <person name="Hamlin N."/>
            <person name="Davies R."/>
            <person name="Gaudet P."/>
            <person name="Fey P."/>
            <person name="Pilcher K."/>
            <person name="Chen G."/>
            <person name="Saunders D."/>
            <person name="Sodergren E.J."/>
            <person name="Davis P."/>
            <person name="Kerhornou A."/>
            <person name="Nie X."/>
            <person name="Hall N."/>
            <person name="Anjard C."/>
            <person name="Hemphill L."/>
            <person name="Bason N."/>
            <person name="Farbrother P."/>
            <person name="Desany B."/>
            <person name="Just E."/>
            <person name="Morio T."/>
            <person name="Rost R."/>
            <person name="Churcher C.M."/>
            <person name="Cooper J."/>
            <person name="Haydock S."/>
            <person name="van Driessche N."/>
            <person name="Cronin A."/>
            <person name="Goodhead I."/>
            <person name="Muzny D.M."/>
            <person name="Mourier T."/>
            <person name="Pain A."/>
            <person name="Lu M."/>
            <person name="Harper D."/>
            <person name="Lindsay R."/>
            <person name="Hauser H."/>
            <person name="James K.D."/>
            <person name="Quiles M."/>
            <person name="Madan Babu M."/>
            <person name="Saito T."/>
            <person name="Buchrieser C."/>
            <person name="Wardroper A."/>
            <person name="Felder M."/>
            <person name="Thangavelu M."/>
            <person name="Johnson D."/>
            <person name="Knights A."/>
            <person name="Loulseged H."/>
            <person name="Mungall K.L."/>
            <person name="Oliver K."/>
            <person name="Price C."/>
            <person name="Quail M.A."/>
            <person name="Urushihara H."/>
            <person name="Hernandez J."/>
            <person name="Rabbinowitsch E."/>
            <person name="Steffen D."/>
            <person name="Sanders M."/>
            <person name="Ma J."/>
            <person name="Kohara Y."/>
            <person name="Sharp S."/>
            <person name="Simmonds M.N."/>
            <person name="Spiegler S."/>
            <person name="Tivey A."/>
            <person name="Sugano S."/>
            <person name="White B."/>
            <person name="Walker D."/>
            <person name="Woodward J.R."/>
            <person name="Winckler T."/>
            <person name="Tanaka Y."/>
            <person name="Shaulsky G."/>
            <person name="Schleicher M."/>
            <person name="Weinstock G.M."/>
            <person name="Rosenthal A."/>
            <person name="Cox E.C."/>
            <person name="Chisholm R.L."/>
            <person name="Gibbs R.A."/>
            <person name="Loomis W.F."/>
            <person name="Platzer M."/>
            <person name="Kay R.R."/>
            <person name="Williams J.G."/>
            <person name="Dear P.H."/>
            <person name="Noegel A.A."/>
            <person name="Barrell B.G."/>
            <person name="Kuspa A."/>
        </authorList>
    </citation>
    <scope>NUCLEOTIDE SEQUENCE [LARGE SCALE GENOMIC DNA]</scope>
    <source>
        <strain>AX4</strain>
    </source>
</reference>
<keyword id="KW-0349">Heme</keyword>
<keyword id="KW-0408">Iron</keyword>
<keyword id="KW-0472">Membrane</keyword>
<keyword id="KW-0479">Metal-binding</keyword>
<keyword id="KW-0503">Monooxygenase</keyword>
<keyword id="KW-0560">Oxidoreductase</keyword>
<keyword id="KW-1185">Reference proteome</keyword>
<keyword id="KW-0812">Transmembrane</keyword>
<keyword id="KW-1133">Transmembrane helix</keyword>
<organism>
    <name type="scientific">Dictyostelium discoideum</name>
    <name type="common">Social amoeba</name>
    <dbReference type="NCBI Taxonomy" id="44689"/>
    <lineage>
        <taxon>Eukaryota</taxon>
        <taxon>Amoebozoa</taxon>
        <taxon>Evosea</taxon>
        <taxon>Eumycetozoa</taxon>
        <taxon>Dictyostelia</taxon>
        <taxon>Dictyosteliales</taxon>
        <taxon>Dictyosteliaceae</taxon>
        <taxon>Dictyostelium</taxon>
    </lineage>
</organism>
<accession>Q54DT2</accession>
<proteinExistence type="inferred from homology"/>
<evidence type="ECO:0000250" key="1"/>
<evidence type="ECO:0000255" key="2"/>
<evidence type="ECO:0000305" key="3"/>